<organism>
    <name type="scientific">Vibrio cholerae serotype O1 (strain ATCC 39541 / Classical Ogawa 395 / O395)</name>
    <dbReference type="NCBI Taxonomy" id="345073"/>
    <lineage>
        <taxon>Bacteria</taxon>
        <taxon>Pseudomonadati</taxon>
        <taxon>Pseudomonadota</taxon>
        <taxon>Gammaproteobacteria</taxon>
        <taxon>Vibrionales</taxon>
        <taxon>Vibrionaceae</taxon>
        <taxon>Vibrio</taxon>
    </lineage>
</organism>
<protein>
    <recommendedName>
        <fullName evidence="1">Small ribosomal subunit protein uS8</fullName>
    </recommendedName>
    <alternativeName>
        <fullName evidence="2">30S ribosomal protein S8</fullName>
    </alternativeName>
</protein>
<accession>A5F566</accession>
<accession>C3LXI1</accession>
<keyword id="KW-0687">Ribonucleoprotein</keyword>
<keyword id="KW-0689">Ribosomal protein</keyword>
<keyword id="KW-0694">RNA-binding</keyword>
<keyword id="KW-0699">rRNA-binding</keyword>
<dbReference type="EMBL" id="CP000627">
    <property type="protein sequence ID" value="ABQ20454.1"/>
    <property type="molecule type" value="Genomic_DNA"/>
</dbReference>
<dbReference type="EMBL" id="CP001235">
    <property type="protein sequence ID" value="ACP10681.1"/>
    <property type="molecule type" value="Genomic_DNA"/>
</dbReference>
<dbReference type="RefSeq" id="WP_000062614.1">
    <property type="nucleotide sequence ID" value="NZ_JAACZH010000007.1"/>
</dbReference>
<dbReference type="SMR" id="A5F566"/>
<dbReference type="GeneID" id="94012766"/>
<dbReference type="KEGG" id="vco:VC0395_A2160"/>
<dbReference type="KEGG" id="vcr:VC395_2695"/>
<dbReference type="PATRIC" id="fig|345073.21.peg.2595"/>
<dbReference type="eggNOG" id="COG0096">
    <property type="taxonomic scope" value="Bacteria"/>
</dbReference>
<dbReference type="HOGENOM" id="CLU_098428_0_0_6"/>
<dbReference type="OrthoDB" id="9802617at2"/>
<dbReference type="Proteomes" id="UP000000249">
    <property type="component" value="Chromosome 2"/>
</dbReference>
<dbReference type="GO" id="GO:1990904">
    <property type="term" value="C:ribonucleoprotein complex"/>
    <property type="evidence" value="ECO:0007669"/>
    <property type="project" value="UniProtKB-KW"/>
</dbReference>
<dbReference type="GO" id="GO:0005840">
    <property type="term" value="C:ribosome"/>
    <property type="evidence" value="ECO:0007669"/>
    <property type="project" value="UniProtKB-KW"/>
</dbReference>
<dbReference type="GO" id="GO:0019843">
    <property type="term" value="F:rRNA binding"/>
    <property type="evidence" value="ECO:0007669"/>
    <property type="project" value="UniProtKB-UniRule"/>
</dbReference>
<dbReference type="GO" id="GO:0003735">
    <property type="term" value="F:structural constituent of ribosome"/>
    <property type="evidence" value="ECO:0007669"/>
    <property type="project" value="InterPro"/>
</dbReference>
<dbReference type="GO" id="GO:0006412">
    <property type="term" value="P:translation"/>
    <property type="evidence" value="ECO:0007669"/>
    <property type="project" value="UniProtKB-UniRule"/>
</dbReference>
<dbReference type="FunFam" id="3.30.1370.30:FF:000003">
    <property type="entry name" value="30S ribosomal protein S8"/>
    <property type="match status" value="1"/>
</dbReference>
<dbReference type="FunFam" id="3.30.1490.10:FF:000001">
    <property type="entry name" value="30S ribosomal protein S8"/>
    <property type="match status" value="1"/>
</dbReference>
<dbReference type="Gene3D" id="3.30.1370.30">
    <property type="match status" value="1"/>
</dbReference>
<dbReference type="Gene3D" id="3.30.1490.10">
    <property type="match status" value="1"/>
</dbReference>
<dbReference type="HAMAP" id="MF_01302_B">
    <property type="entry name" value="Ribosomal_uS8_B"/>
    <property type="match status" value="1"/>
</dbReference>
<dbReference type="InterPro" id="IPR000630">
    <property type="entry name" value="Ribosomal_uS8"/>
</dbReference>
<dbReference type="InterPro" id="IPR047863">
    <property type="entry name" value="Ribosomal_uS8_CS"/>
</dbReference>
<dbReference type="InterPro" id="IPR035987">
    <property type="entry name" value="Ribosomal_uS8_sf"/>
</dbReference>
<dbReference type="NCBIfam" id="NF001109">
    <property type="entry name" value="PRK00136.1"/>
    <property type="match status" value="1"/>
</dbReference>
<dbReference type="PANTHER" id="PTHR11758">
    <property type="entry name" value="40S RIBOSOMAL PROTEIN S15A"/>
    <property type="match status" value="1"/>
</dbReference>
<dbReference type="Pfam" id="PF00410">
    <property type="entry name" value="Ribosomal_S8"/>
    <property type="match status" value="1"/>
</dbReference>
<dbReference type="SUPFAM" id="SSF56047">
    <property type="entry name" value="Ribosomal protein S8"/>
    <property type="match status" value="1"/>
</dbReference>
<dbReference type="PROSITE" id="PS00053">
    <property type="entry name" value="RIBOSOMAL_S8"/>
    <property type="match status" value="1"/>
</dbReference>
<sequence>MSMQDPISDMLTRIRNGQAANKVAVKMPSSKLKVAIAALLKAEGYIADFAVEGEVKAELEITLKYFQAKPVIEQIKRVSRPGLRVYKKKDELPSVMGGLGVAVVSTSKGLMSDRAARKAGLGGEIICYVA</sequence>
<reference key="1">
    <citation type="submission" date="2007-03" db="EMBL/GenBank/DDBJ databases">
        <authorList>
            <person name="Heidelberg J."/>
        </authorList>
    </citation>
    <scope>NUCLEOTIDE SEQUENCE [LARGE SCALE GENOMIC DNA]</scope>
    <source>
        <strain>ATCC 39541 / Classical Ogawa 395 / O395</strain>
    </source>
</reference>
<reference key="2">
    <citation type="journal article" date="2008" name="PLoS ONE">
        <title>A recalibrated molecular clock and independent origins for the cholera pandemic clones.</title>
        <authorList>
            <person name="Feng L."/>
            <person name="Reeves P.R."/>
            <person name="Lan R."/>
            <person name="Ren Y."/>
            <person name="Gao C."/>
            <person name="Zhou Z."/>
            <person name="Ren Y."/>
            <person name="Cheng J."/>
            <person name="Wang W."/>
            <person name="Wang J."/>
            <person name="Qian W."/>
            <person name="Li D."/>
            <person name="Wang L."/>
        </authorList>
    </citation>
    <scope>NUCLEOTIDE SEQUENCE [LARGE SCALE GENOMIC DNA]</scope>
    <source>
        <strain>ATCC 39541 / Classical Ogawa 395 / O395</strain>
    </source>
</reference>
<name>RS8_VIBC3</name>
<feature type="chain" id="PRO_1000073198" description="Small ribosomal subunit protein uS8">
    <location>
        <begin position="1"/>
        <end position="130"/>
    </location>
</feature>
<comment type="function">
    <text evidence="1">One of the primary rRNA binding proteins, it binds directly to 16S rRNA central domain where it helps coordinate assembly of the platform of the 30S subunit.</text>
</comment>
<comment type="subunit">
    <text evidence="1">Part of the 30S ribosomal subunit. Contacts proteins S5 and S12.</text>
</comment>
<comment type="similarity">
    <text evidence="1">Belongs to the universal ribosomal protein uS8 family.</text>
</comment>
<gene>
    <name evidence="1" type="primary">rpsH</name>
    <name type="ordered locus">VC0395_A2160</name>
    <name type="ordered locus">VC395_2695</name>
</gene>
<proteinExistence type="inferred from homology"/>
<evidence type="ECO:0000255" key="1">
    <source>
        <dbReference type="HAMAP-Rule" id="MF_01302"/>
    </source>
</evidence>
<evidence type="ECO:0000305" key="2"/>